<protein>
    <recommendedName>
        <fullName evidence="1">Elongation factor P</fullName>
        <shortName evidence="1">EF-P</shortName>
    </recommendedName>
</protein>
<keyword id="KW-0963">Cytoplasm</keyword>
<keyword id="KW-0251">Elongation factor</keyword>
<keyword id="KW-0325">Glycoprotein</keyword>
<keyword id="KW-0648">Protein biosynthesis</keyword>
<keyword id="KW-1185">Reference proteome</keyword>
<sequence>MKTAHEVRPGNVIMFEGSPWVVQKTETTRSGRNAAIVKLKLKNLLLNSGTETTFKGEDKIDDIILDRLDCTYSYFADPMYVFMDAEYNQYDVEAENLGDAAAYIVDGMEETCQVTFYDGKAISVEMPTTIVREVIYTEPSARGDTSGKVMKPATITGGGTISVADFVKVGDKIEIDTRTGEFKKRV</sequence>
<gene>
    <name evidence="1" type="primary">efp</name>
    <name type="ordered locus">SO_2328</name>
</gene>
<organism>
    <name type="scientific">Shewanella oneidensis (strain ATCC 700550 / JCM 31522 / CIP 106686 / LMG 19005 / NCIMB 14063 / MR-1)</name>
    <dbReference type="NCBI Taxonomy" id="211586"/>
    <lineage>
        <taxon>Bacteria</taxon>
        <taxon>Pseudomonadati</taxon>
        <taxon>Pseudomonadota</taxon>
        <taxon>Gammaproteobacteria</taxon>
        <taxon>Alteromonadales</taxon>
        <taxon>Shewanellaceae</taxon>
        <taxon>Shewanella</taxon>
    </lineage>
</organism>
<evidence type="ECO:0000255" key="1">
    <source>
        <dbReference type="HAMAP-Rule" id="MF_00141"/>
    </source>
</evidence>
<evidence type="ECO:0000269" key="2">
    <source>
    </source>
</evidence>
<evidence type="ECO:0000269" key="3">
    <source>
    </source>
</evidence>
<reference key="1">
    <citation type="journal article" date="2002" name="Nat. Biotechnol.">
        <title>Genome sequence of the dissimilatory metal ion-reducing bacterium Shewanella oneidensis.</title>
        <authorList>
            <person name="Heidelberg J.F."/>
            <person name="Paulsen I.T."/>
            <person name="Nelson K.E."/>
            <person name="Gaidos E.J."/>
            <person name="Nelson W.C."/>
            <person name="Read T.D."/>
            <person name="Eisen J.A."/>
            <person name="Seshadri R."/>
            <person name="Ward N.L."/>
            <person name="Methe B.A."/>
            <person name="Clayton R.A."/>
            <person name="Meyer T."/>
            <person name="Tsapin A."/>
            <person name="Scott J."/>
            <person name="Beanan M.J."/>
            <person name="Brinkac L.M."/>
            <person name="Daugherty S.C."/>
            <person name="DeBoy R.T."/>
            <person name="Dodson R.J."/>
            <person name="Durkin A.S."/>
            <person name="Haft D.H."/>
            <person name="Kolonay J.F."/>
            <person name="Madupu R."/>
            <person name="Peterson J.D."/>
            <person name="Umayam L.A."/>
            <person name="White O."/>
            <person name="Wolf A.M."/>
            <person name="Vamathevan J.J."/>
            <person name="Weidman J.F."/>
            <person name="Impraim M."/>
            <person name="Lee K."/>
            <person name="Berry K.J."/>
            <person name="Lee C."/>
            <person name="Mueller J."/>
            <person name="Khouri H.M."/>
            <person name="Gill J."/>
            <person name="Utterback T.R."/>
            <person name="McDonald L.A."/>
            <person name="Feldblyum T.V."/>
            <person name="Smith H.O."/>
            <person name="Venter J.C."/>
            <person name="Nealson K.H."/>
            <person name="Fraser C.M."/>
        </authorList>
    </citation>
    <scope>NUCLEOTIDE SEQUENCE [LARGE SCALE GENOMIC DNA]</scope>
    <source>
        <strain>ATCC 700550 / JCM 31522 / CIP 106686 / LMG 19005 / NCIMB 14063 / MR-1</strain>
    </source>
</reference>
<reference key="2">
    <citation type="journal article" date="2015" name="Nat. Chem. Biol.">
        <title>Arginine-rhamnosylation as new strategy to activate translation elongation factor P.</title>
        <authorList>
            <person name="Lassak J."/>
            <person name="Keilhauer E.C."/>
            <person name="Fuerst M."/>
            <person name="Wuichet K."/>
            <person name="Goedeke J."/>
            <person name="Starosta A.L."/>
            <person name="Chen J.M."/>
            <person name="Soegaard-Andersen L."/>
            <person name="Rohr J."/>
            <person name="Wilson D.N."/>
            <person name="Haeussler S."/>
            <person name="Mann M."/>
            <person name="Jung K."/>
        </authorList>
    </citation>
    <scope>GLYCOSYLATION AT ARG-32</scope>
    <scope>MUTAGENESIS OF ARG-32</scope>
</reference>
<reference key="3">
    <citation type="journal article" date="2016" name="Chem. Sci.">
        <title>Resolving the alpha-glycosidic linkage of arginine-rhamnosylated translation elongation factor P triggers generation of the first ArgRha specific antibody.</title>
        <authorList>
            <person name="Li X."/>
            <person name="Krafczyk R."/>
            <person name="Macosek J."/>
            <person name="Li Y.L."/>
            <person name="Zou Y."/>
            <person name="Simon B."/>
            <person name="Pan X."/>
            <person name="Wu Q.Y."/>
            <person name="Yan F."/>
            <person name="Li S."/>
            <person name="Hennig J."/>
            <person name="Jung K."/>
            <person name="Lassak J."/>
            <person name="Hu H.G."/>
        </authorList>
    </citation>
    <scope>GLYCOSYLATION AT ARG-32</scope>
</reference>
<accession>Q8EEP9</accession>
<proteinExistence type="evidence at protein level"/>
<comment type="function">
    <text evidence="1">Involved in peptide bond synthesis. Stimulates efficient translation and peptide-bond synthesis on native or reconstituted 70S ribosomes in vitro. Probably functions indirectly by altering the affinity of the ribosome for aminoacyl-tRNA, thus increasing their reactivity as acceptors for peptidyl transferase.</text>
</comment>
<comment type="pathway">
    <text evidence="1">Protein biosynthesis; polypeptide chain elongation.</text>
</comment>
<comment type="subcellular location">
    <subcellularLocation>
        <location evidence="1">Cytoplasm</location>
    </subcellularLocation>
</comment>
<comment type="PTM">
    <text evidence="2">Glycosylated ar Arg-32 by EarP: arginine rhamnosylation is required for EF-P function and rescue of polyproline stalled ribosomes.</text>
</comment>
<comment type="similarity">
    <text evidence="1">Belongs to the elongation factor P family.</text>
</comment>
<dbReference type="EMBL" id="AE014299">
    <property type="protein sequence ID" value="AAN55362.1"/>
    <property type="molecule type" value="Genomic_DNA"/>
</dbReference>
<dbReference type="RefSeq" id="NP_717918.1">
    <property type="nucleotide sequence ID" value="NC_004347.2"/>
</dbReference>
<dbReference type="RefSeq" id="WP_011072320.1">
    <property type="nucleotide sequence ID" value="NC_004347.2"/>
</dbReference>
<dbReference type="SMR" id="Q8EEP9"/>
<dbReference type="STRING" id="211586.SO_2328"/>
<dbReference type="GlyCosmos" id="Q8EEP9">
    <property type="glycosylation" value="1 site, No reported glycans"/>
</dbReference>
<dbReference type="PaxDb" id="211586-SO_2328"/>
<dbReference type="KEGG" id="son:SO_2328"/>
<dbReference type="PATRIC" id="fig|211586.12.peg.2243"/>
<dbReference type="eggNOG" id="COG0231">
    <property type="taxonomic scope" value="Bacteria"/>
</dbReference>
<dbReference type="HOGENOM" id="CLU_074944_2_1_6"/>
<dbReference type="OrthoDB" id="9801844at2"/>
<dbReference type="PhylomeDB" id="Q8EEP9"/>
<dbReference type="BioCyc" id="SONE211586:G1GMP-2127-MONOMER"/>
<dbReference type="UniPathway" id="UPA00345"/>
<dbReference type="Proteomes" id="UP000008186">
    <property type="component" value="Chromosome"/>
</dbReference>
<dbReference type="GO" id="GO:0005737">
    <property type="term" value="C:cytoplasm"/>
    <property type="evidence" value="ECO:0000318"/>
    <property type="project" value="GO_Central"/>
</dbReference>
<dbReference type="GO" id="GO:0003746">
    <property type="term" value="F:translation elongation factor activity"/>
    <property type="evidence" value="ECO:0000318"/>
    <property type="project" value="GO_Central"/>
</dbReference>
<dbReference type="GO" id="GO:0043043">
    <property type="term" value="P:peptide biosynthetic process"/>
    <property type="evidence" value="ECO:0007669"/>
    <property type="project" value="InterPro"/>
</dbReference>
<dbReference type="CDD" id="cd04470">
    <property type="entry name" value="S1_EF-P_repeat_1"/>
    <property type="match status" value="1"/>
</dbReference>
<dbReference type="CDD" id="cd05794">
    <property type="entry name" value="S1_EF-P_repeat_2"/>
    <property type="match status" value="1"/>
</dbReference>
<dbReference type="FunFam" id="2.30.30.30:FF:000003">
    <property type="entry name" value="Elongation factor P"/>
    <property type="match status" value="1"/>
</dbReference>
<dbReference type="FunFam" id="2.40.50.140:FF:000004">
    <property type="entry name" value="Elongation factor P"/>
    <property type="match status" value="1"/>
</dbReference>
<dbReference type="FunFam" id="2.40.50.140:FF:000009">
    <property type="entry name" value="Elongation factor P"/>
    <property type="match status" value="1"/>
</dbReference>
<dbReference type="Gene3D" id="2.30.30.30">
    <property type="match status" value="1"/>
</dbReference>
<dbReference type="Gene3D" id="2.40.50.140">
    <property type="entry name" value="Nucleic acid-binding proteins"/>
    <property type="match status" value="2"/>
</dbReference>
<dbReference type="HAMAP" id="MF_00141">
    <property type="entry name" value="EF_P"/>
    <property type="match status" value="1"/>
</dbReference>
<dbReference type="InterPro" id="IPR015365">
    <property type="entry name" value="Elong-fact-P_C"/>
</dbReference>
<dbReference type="InterPro" id="IPR012340">
    <property type="entry name" value="NA-bd_OB-fold"/>
</dbReference>
<dbReference type="InterPro" id="IPR014722">
    <property type="entry name" value="Rib_uL2_dom2"/>
</dbReference>
<dbReference type="InterPro" id="IPR020599">
    <property type="entry name" value="Transl_elong_fac_P/YeiP"/>
</dbReference>
<dbReference type="InterPro" id="IPR013185">
    <property type="entry name" value="Transl_elong_KOW-like"/>
</dbReference>
<dbReference type="InterPro" id="IPR001059">
    <property type="entry name" value="Transl_elong_P/YeiP_cen"/>
</dbReference>
<dbReference type="InterPro" id="IPR011768">
    <property type="entry name" value="Transl_elongation_fac_P"/>
</dbReference>
<dbReference type="InterPro" id="IPR008991">
    <property type="entry name" value="Translation_prot_SH3-like_sf"/>
</dbReference>
<dbReference type="NCBIfam" id="TIGR00038">
    <property type="entry name" value="efp"/>
    <property type="match status" value="1"/>
</dbReference>
<dbReference type="NCBIfam" id="NF001810">
    <property type="entry name" value="PRK00529.1"/>
    <property type="match status" value="1"/>
</dbReference>
<dbReference type="PANTHER" id="PTHR30053">
    <property type="entry name" value="ELONGATION FACTOR P"/>
    <property type="match status" value="1"/>
</dbReference>
<dbReference type="PANTHER" id="PTHR30053:SF12">
    <property type="entry name" value="ELONGATION FACTOR P (EF-P) FAMILY PROTEIN"/>
    <property type="match status" value="1"/>
</dbReference>
<dbReference type="Pfam" id="PF01132">
    <property type="entry name" value="EFP"/>
    <property type="match status" value="1"/>
</dbReference>
<dbReference type="Pfam" id="PF08207">
    <property type="entry name" value="EFP_N"/>
    <property type="match status" value="1"/>
</dbReference>
<dbReference type="Pfam" id="PF09285">
    <property type="entry name" value="Elong-fact-P_C"/>
    <property type="match status" value="1"/>
</dbReference>
<dbReference type="PIRSF" id="PIRSF005901">
    <property type="entry name" value="EF-P"/>
    <property type="match status" value="1"/>
</dbReference>
<dbReference type="SMART" id="SM01185">
    <property type="entry name" value="EFP"/>
    <property type="match status" value="1"/>
</dbReference>
<dbReference type="SMART" id="SM00841">
    <property type="entry name" value="Elong-fact-P_C"/>
    <property type="match status" value="1"/>
</dbReference>
<dbReference type="SUPFAM" id="SSF50249">
    <property type="entry name" value="Nucleic acid-binding proteins"/>
    <property type="match status" value="2"/>
</dbReference>
<dbReference type="SUPFAM" id="SSF50104">
    <property type="entry name" value="Translation proteins SH3-like domain"/>
    <property type="match status" value="1"/>
</dbReference>
<feature type="chain" id="PRO_0000094325" description="Elongation factor P">
    <location>
        <begin position="1"/>
        <end position="186"/>
    </location>
</feature>
<feature type="glycosylation site" description="N-alpha-linked (Rha) arginine" evidence="2 3">
    <location>
        <position position="32"/>
    </location>
</feature>
<feature type="mutagenesis site" description="Abolished arginine rhamnosylation." evidence="2">
    <original>R</original>
    <variation>A</variation>
    <variation>K</variation>
    <location>
        <position position="32"/>
    </location>
</feature>
<name>EFP_SHEON</name>